<gene>
    <name evidence="2" type="primary">cbbL</name>
    <name type="synonym">rbc</name>
    <name type="synonym">rbcA</name>
    <name evidence="2 7" type="synonym">rbcL</name>
    <name type="ordered locus">alr1524</name>
</gene>
<sequence>MSYAQTKTQTKSGYKAGVQDYRLTYYTPDYTPKDTDILAAFRVTPQPGVPFEEAAAAVAAESSTGTWTTVWTDLLTDLDRYKGRCYDIEPVPGEDNQFIAYIAYPLDLFEEGSITNVLTSIVGNVFGFKALRALRLEDIRFPVAYIKTFQGPPHGIQVERDKLNKYGRPLLGCTIKPKLGLSAKNYGRAVYECLRGGLDFTKDDENINSAPFQRWRDRFLFVADAITKAQAETGEIKGHYLNVTAPTCEEMLKRAEYAKELKQPIIMHDYLTAGFTANTTLARWCRDNGVLLHIHRAMHAVIDRQKNHGIHFRVLAKALRLSGGDHIHTGTVVGKLEGERGITMGFVDLLRENYVEQDKSRGIYFTQDWASLPGVMAVASGGIHVWHMPALVEIFGDDSVLQFGGGTLGHPWGNAPGATANRVALEACVQARNEGRNLAREGNDVIREAAKWSPELAVACELWKEIKFEFEAMDTV</sequence>
<evidence type="ECO:0000250" key="1">
    <source>
        <dbReference type="UniProtKB" id="Q31NB3"/>
    </source>
</evidence>
<evidence type="ECO:0000255" key="2">
    <source>
        <dbReference type="HAMAP-Rule" id="MF_01338"/>
    </source>
</evidence>
<evidence type="ECO:0000269" key="3">
    <source>
    </source>
</evidence>
<evidence type="ECO:0000269" key="4">
    <source>
    </source>
</evidence>
<evidence type="ECO:0000269" key="5">
    <source>
    </source>
</evidence>
<evidence type="ECO:0000269" key="6">
    <source ref="4"/>
</evidence>
<evidence type="ECO:0000303" key="7">
    <source>
    </source>
</evidence>
<evidence type="ECO:0000305" key="8"/>
<evidence type="ECO:0007744" key="9">
    <source>
        <dbReference type="PDB" id="6KKM"/>
    </source>
</evidence>
<evidence type="ECO:0007744" key="10">
    <source>
        <dbReference type="PDB" id="6LRR"/>
    </source>
</evidence>
<evidence type="ECO:0007744" key="11">
    <source>
        <dbReference type="PDB" id="6LRS"/>
    </source>
</evidence>
<evidence type="ECO:0007829" key="12">
    <source>
        <dbReference type="PDB" id="6KKM"/>
    </source>
</evidence>
<evidence type="ECO:0007829" key="13">
    <source>
        <dbReference type="PDB" id="6LRR"/>
    </source>
</evidence>
<evidence type="ECO:0007829" key="14">
    <source>
        <dbReference type="PDB" id="6Z1F"/>
    </source>
</evidence>
<evidence type="ECO:0007829" key="15">
    <source>
        <dbReference type="PDB" id="7XSD"/>
    </source>
</evidence>
<protein>
    <recommendedName>
        <fullName evidence="2">Ribulose bisphosphate carboxylase large chain</fullName>
        <shortName evidence="2">RuBisCO large subunit</shortName>
        <ecNumber evidence="2 4">4.1.1.39</ecNumber>
    </recommendedName>
</protein>
<keyword id="KW-0002">3D-structure</keyword>
<keyword id="KW-1283">Bacterial microcompartment</keyword>
<keyword id="KW-0113">Calvin cycle</keyword>
<keyword id="KW-0120">Carbon dioxide fixation</keyword>
<keyword id="KW-1282">Carboxysome</keyword>
<keyword id="KW-0903">Direct protein sequencing</keyword>
<keyword id="KW-1015">Disulfide bond</keyword>
<keyword id="KW-0456">Lyase</keyword>
<keyword id="KW-0460">Magnesium</keyword>
<keyword id="KW-0479">Metal-binding</keyword>
<keyword id="KW-0503">Monooxygenase</keyword>
<keyword id="KW-0560">Oxidoreductase</keyword>
<keyword id="KW-0601">Photorespiration</keyword>
<keyword id="KW-0602">Photosynthesis</keyword>
<keyword id="KW-1185">Reference proteome</keyword>
<reference key="1">
    <citation type="journal article" date="1983" name="Proc. Natl. Acad. Sci. U.S.A.">
        <title>Isolation and sequence of the gene for the large subunit of ribulose-1,5-bisphosphate carboxylase from the cyanobacterium Anabaena 7120.</title>
        <authorList>
            <person name="Curtis S.E."/>
            <person name="Haselkorn R."/>
        </authorList>
    </citation>
    <scope>NUCLEOTIDE SEQUENCE [GENOMIC DNA]</scope>
    <scope>INDUCTION</scope>
    <scope>OPERON STRUCTURE</scope>
    <source>
        <strain>PCC 7120 / SAG 25.82 / UTEX 2576</strain>
    </source>
</reference>
<reference key="2">
    <citation type="journal article" date="1984" name="Proc. Natl. Acad. Sci. U.S.A.">
        <title>Cotranscription of genes encoding the small and large subunits of ribulose-1,5-bisphosphate carboxylase in the cyanobacterium Anabaena 7120.</title>
        <authorList>
            <person name="Nierzwicki-Bauer S.A."/>
            <person name="Curtis S.E."/>
            <person name="Haselkorn R."/>
        </authorList>
    </citation>
    <scope>NUCLEOTIDE SEQUENCE [GENOMIC DNA]</scope>
    <scope>SEQUENCE REVISION</scope>
    <source>
        <strain>PCC 7120 / SAG 25.82 / UTEX 2576</strain>
    </source>
</reference>
<reference key="3">
    <citation type="journal article" date="2001" name="DNA Res.">
        <title>Complete genomic sequence of the filamentous nitrogen-fixing cyanobacterium Anabaena sp. strain PCC 7120.</title>
        <authorList>
            <person name="Kaneko T."/>
            <person name="Nakamura Y."/>
            <person name="Wolk C.P."/>
            <person name="Kuritz T."/>
            <person name="Sasamoto S."/>
            <person name="Watanabe A."/>
            <person name="Iriguchi M."/>
            <person name="Ishikawa A."/>
            <person name="Kawashima K."/>
            <person name="Kimura T."/>
            <person name="Kishida Y."/>
            <person name="Kohara M."/>
            <person name="Matsumoto M."/>
            <person name="Matsuno A."/>
            <person name="Muraki A."/>
            <person name="Nakazaki N."/>
            <person name="Shimpo S."/>
            <person name="Sugimoto M."/>
            <person name="Takazawa M."/>
            <person name="Yamada M."/>
            <person name="Yasuda M."/>
            <person name="Tabata S."/>
        </authorList>
    </citation>
    <scope>NUCLEOTIDE SEQUENCE [LARGE SCALE GENOMIC DNA]</scope>
    <source>
        <strain>PCC 7120 / SAG 25.82 / UTEX 2576</strain>
    </source>
</reference>
<reference key="4">
    <citation type="submission" date="2008-12" db="UniProtKB">
        <authorList>
            <person name="Singh H."/>
            <person name="Rajaram H."/>
            <person name="Apte S.K."/>
        </authorList>
    </citation>
    <scope>PROTEIN SEQUENCE OF 16-22</scope>
    <scope>MASS SPECTROMETRY</scope>
</reference>
<reference key="5">
    <citation type="journal article" date="2014" name="Photosyn. Res.">
        <title>Identification and characterization of a carboxysomal gamma-carbonic anhydrase from the cyanobacterium Nostoc sp. PCC 7120.</title>
        <authorList>
            <person name="de Araujo C."/>
            <person name="Arefeen D."/>
            <person name="Tadesse Y."/>
            <person name="Long B.M."/>
            <person name="Price G.D."/>
            <person name="Rowlett R.S."/>
            <person name="Kimber M.S."/>
            <person name="Espie G.S."/>
        </authorList>
    </citation>
    <scope>SUBCELLULAR LOCATION</scope>
    <source>
        <strain>PCC 7120 / SAG 25.82 / UTEX 2576</strain>
    </source>
</reference>
<reference evidence="9 10 11" key="6">
    <citation type="journal article" date="2020" name="Nat. Plants">
        <title>Molecular basis for the assembly of RuBisCO assisted by the chaperone Raf1.</title>
        <authorList>
            <person name="Xia L.Y."/>
            <person name="Jiang Y.L."/>
            <person name="Kong W.W."/>
            <person name="Sun H."/>
            <person name="Li W.F."/>
            <person name="Chen Y."/>
            <person name="Zhou C.Z."/>
        </authorList>
    </citation>
    <scope>X-RAY CRYSTALLOGRAPHY (3.00 ANGSTROMS) IN COMPLEX WITH RAF1</scope>
    <scope>STRUCTURE BY ELECTRON MICROSCOPY (3.37 ANGSTROMS) IN COMPLEX WITH RBCS AND RAF1</scope>
    <scope>FUNCTION</scope>
    <scope>RUBISCO FOLDING AND ASSEMBLY</scope>
    <scope>SUBUNIT</scope>
    <scope>DISULFIDE BOND</scope>
    <source>
        <strain>PCC 7120 / SAG 25.82 / UTEX 2576</strain>
    </source>
</reference>
<comment type="function">
    <text evidence="2">RuBisCO catalyzes two reactions: the carboxylation of D-ribulose 1,5-bisphosphate, the primary event in carbon dioxide fixation, as well as the oxidative fragmentation of the pentose substrate in the photorespiration process. Both reactions occur simultaneously and in competition at the same active site.</text>
</comment>
<comment type="catalytic activity">
    <reaction evidence="2 4">
        <text>2 (2R)-3-phosphoglycerate + 2 H(+) = D-ribulose 1,5-bisphosphate + CO2 + H2O</text>
        <dbReference type="Rhea" id="RHEA:23124"/>
        <dbReference type="ChEBI" id="CHEBI:15377"/>
        <dbReference type="ChEBI" id="CHEBI:15378"/>
        <dbReference type="ChEBI" id="CHEBI:16526"/>
        <dbReference type="ChEBI" id="CHEBI:57870"/>
        <dbReference type="ChEBI" id="CHEBI:58272"/>
        <dbReference type="EC" id="4.1.1.39"/>
    </reaction>
</comment>
<comment type="catalytic activity">
    <reaction evidence="2">
        <text>D-ribulose 1,5-bisphosphate + O2 = 2-phosphoglycolate + (2R)-3-phosphoglycerate + 2 H(+)</text>
        <dbReference type="Rhea" id="RHEA:36631"/>
        <dbReference type="ChEBI" id="CHEBI:15378"/>
        <dbReference type="ChEBI" id="CHEBI:15379"/>
        <dbReference type="ChEBI" id="CHEBI:57870"/>
        <dbReference type="ChEBI" id="CHEBI:58033"/>
        <dbReference type="ChEBI" id="CHEBI:58272"/>
    </reaction>
</comment>
<comment type="cofactor">
    <cofactor evidence="2">
        <name>Mg(2+)</name>
        <dbReference type="ChEBI" id="CHEBI:18420"/>
    </cofactor>
    <text evidence="2">Binds 1 Mg(2+) ion per subunit.</text>
</comment>
<comment type="subunit">
    <text evidence="1 2 4">Heterohexadecamer of 8 large chains and 8 small chains; disulfide-linked. The disulfide link is formed within the large subunit homodimers (By similarity) (PubMed:32451445). Forms complexes of many stoichiometries with Raf1 with and without RbcS (PubMed:32451445). RuBisCO interacts with the C-terminus of CcmM (By similarity).</text>
</comment>
<comment type="subcellular location">
    <subcellularLocation>
        <location evidence="2 3">Carboxysome</location>
    </subcellularLocation>
    <text evidence="1 3">This cyanobacterium makes beta-type carboxysomes (PubMed:24907906). In the carboxysome RuBisCO is organized into a paracrystalline array (By similarity).</text>
</comment>
<comment type="induction">
    <text evidence="5">Part of the rbcL-rbcS operon, transcribed in light and constitutively during growth on fructose.</text>
</comment>
<comment type="PTM">
    <text evidence="2">The disulfide bond which can form in the large chain dimeric partners within the hexadecamer appears to be associated with oxidative stress and protein turnover.</text>
</comment>
<comment type="mass spectrometry"/>
<comment type="miscellaneous">
    <text evidence="4">RuBisCO folding and assembly commences when the nascent large subunit folds with the help of chaperonin GroEL-GroES. Both RbcX and Raf1 help folded RbcL release from the chaperonin and dimerize; dimeric Raf1 binds to RbcL(2) leading to an RbcL8-Raf1(8) complex. RbcS displaces Raf1, resulting in holoenzyme formation.</text>
</comment>
<comment type="miscellaneous">
    <text evidence="2">The basic functional RuBisCO is composed of a large chain homodimer in a 'head-to-tail' conformation. In form I RuBisCO this homodimer is arranged in a barrel-like tetramer with the small subunits forming a tetrameric 'cap' on each end of the 'barrel'.</text>
</comment>
<comment type="similarity">
    <text evidence="2">Belongs to the RuBisCO large chain family. Type I subfamily.</text>
</comment>
<feature type="chain" id="PRO_0000062619" description="Ribulose bisphosphate carboxylase large chain">
    <location>
        <begin position="1"/>
        <end position="476"/>
    </location>
</feature>
<feature type="active site" description="Proton acceptor" evidence="2">
    <location>
        <position position="176"/>
    </location>
</feature>
<feature type="active site" description="Proton acceptor" evidence="2">
    <location>
        <position position="295"/>
    </location>
</feature>
<feature type="binding site" description="in homodimeric partner" evidence="2">
    <location>
        <position position="124"/>
    </location>
    <ligand>
        <name>substrate</name>
    </ligand>
</feature>
<feature type="binding site" evidence="2">
    <location>
        <position position="174"/>
    </location>
    <ligand>
        <name>substrate</name>
    </ligand>
</feature>
<feature type="binding site" evidence="2">
    <location>
        <position position="178"/>
    </location>
    <ligand>
        <name>substrate</name>
    </ligand>
</feature>
<feature type="binding site" description="via carbamate group" evidence="2">
    <location>
        <position position="202"/>
    </location>
    <ligand>
        <name>Mg(2+)</name>
        <dbReference type="ChEBI" id="CHEBI:18420"/>
    </ligand>
</feature>
<feature type="binding site" evidence="2">
    <location>
        <position position="204"/>
    </location>
    <ligand>
        <name>Mg(2+)</name>
        <dbReference type="ChEBI" id="CHEBI:18420"/>
    </ligand>
</feature>
<feature type="binding site" evidence="2">
    <location>
        <position position="205"/>
    </location>
    <ligand>
        <name>Mg(2+)</name>
        <dbReference type="ChEBI" id="CHEBI:18420"/>
    </ligand>
</feature>
<feature type="binding site" evidence="2">
    <location>
        <position position="296"/>
    </location>
    <ligand>
        <name>substrate</name>
    </ligand>
</feature>
<feature type="binding site" evidence="2">
    <location>
        <position position="328"/>
    </location>
    <ligand>
        <name>substrate</name>
    </ligand>
</feature>
<feature type="binding site" evidence="2">
    <location>
        <position position="380"/>
    </location>
    <ligand>
        <name>substrate</name>
    </ligand>
</feature>
<feature type="site" description="Transition state stabilizer" evidence="2">
    <location>
        <position position="335"/>
    </location>
</feature>
<feature type="modified residue" description="N6-carboxylysine" evidence="2">
    <location>
        <position position="202"/>
    </location>
</feature>
<feature type="disulfide bond" description="Interchain; in linked form" evidence="2 4 9 10">
    <location>
        <position position="248"/>
    </location>
</feature>
<feature type="sequence conflict" description="In Ref. 1; AAA22041 and 2; AAA22024/AAA22027/AAA22028." evidence="8" ref="1 2">
    <original>V</original>
    <variation>G</variation>
    <location>
        <position position="91"/>
    </location>
</feature>
<feature type="sequence conflict" description="In Ref. 1; AAA22041 and 2; AAA22024/AAA22027/AAA22028." evidence="8" ref="1 2">
    <original>F</original>
    <variation>S</variation>
    <location>
        <position position="98"/>
    </location>
</feature>
<feature type="sequence conflict" description="In Ref. 1; AAA22041 and 2; AAA22024/AAA22027/AAA22028." evidence="8" ref="1 2">
    <original>S</original>
    <variation>Y</variation>
    <location>
        <position position="120"/>
    </location>
</feature>
<feature type="sequence conflict" description="In Ref. 1; AAA22041 and 2; AAA22024/AAA22027/AAA22028." evidence="8" ref="1 2">
    <original>G</original>
    <variation>V</variation>
    <location>
        <position position="127"/>
    </location>
</feature>
<feature type="sequence conflict" description="In Ref. 1; AAA22041 and 2; AAA22024/AAA22027/AAA22028." evidence="8" ref="1 2">
    <original>T</original>
    <variation>N</variation>
    <location>
        <position position="279"/>
    </location>
</feature>
<feature type="sequence conflict" description="In Ref. 1; AAA22041 and 2; AAA22024/AAA22027/AAA22028." evidence="8" ref="1 2">
    <original>V</original>
    <variation>L</variation>
    <location>
        <position position="290"/>
    </location>
</feature>
<feature type="sequence conflict" description="In Ref. 1; AAA22041 and 2; AAA22024/AAA22027/AAA22028." evidence="8" ref="1 2">
    <original>S</original>
    <variation>F</variation>
    <location>
        <position position="399"/>
    </location>
</feature>
<feature type="sequence conflict" description="In Ref. 1; AAA22041 and 2; AAA22024/AAA22027/AAA22028." evidence="8" ref="1 2">
    <original>P</original>
    <variation>R</variation>
    <location>
        <position position="416"/>
    </location>
</feature>
<feature type="turn" evidence="14">
    <location>
        <begin position="21"/>
        <end position="23"/>
    </location>
</feature>
<feature type="strand" evidence="13">
    <location>
        <begin position="24"/>
        <end position="26"/>
    </location>
</feature>
<feature type="strand" evidence="14">
    <location>
        <begin position="36"/>
        <end position="45"/>
    </location>
</feature>
<feature type="helix" evidence="14">
    <location>
        <begin position="51"/>
        <end position="61"/>
    </location>
</feature>
<feature type="turn" evidence="14">
    <location>
        <begin position="62"/>
        <end position="64"/>
    </location>
</feature>
<feature type="helix" evidence="14">
    <location>
        <begin position="73"/>
        <end position="75"/>
    </location>
</feature>
<feature type="strand" evidence="14">
    <location>
        <begin position="78"/>
        <end position="81"/>
    </location>
</feature>
<feature type="strand" evidence="14">
    <location>
        <begin position="84"/>
        <end position="90"/>
    </location>
</feature>
<feature type="strand" evidence="12">
    <location>
        <begin position="93"/>
        <end position="96"/>
    </location>
</feature>
<feature type="strand" evidence="14">
    <location>
        <begin position="98"/>
        <end position="105"/>
    </location>
</feature>
<feature type="helix" evidence="14">
    <location>
        <begin position="106"/>
        <end position="108"/>
    </location>
</feature>
<feature type="helix" evidence="14">
    <location>
        <begin position="114"/>
        <end position="121"/>
    </location>
</feature>
<feature type="strand" evidence="14">
    <location>
        <begin position="122"/>
        <end position="125"/>
    </location>
</feature>
<feature type="strand" evidence="14">
    <location>
        <begin position="131"/>
        <end position="140"/>
    </location>
</feature>
<feature type="helix" evidence="14">
    <location>
        <begin position="143"/>
        <end position="146"/>
    </location>
</feature>
<feature type="strand" evidence="12">
    <location>
        <begin position="152"/>
        <end position="154"/>
    </location>
</feature>
<feature type="helix" evidence="14">
    <location>
        <begin position="156"/>
        <end position="163"/>
    </location>
</feature>
<feature type="strand" evidence="14">
    <location>
        <begin position="170"/>
        <end position="172"/>
    </location>
</feature>
<feature type="strand" evidence="14">
    <location>
        <begin position="176"/>
        <end position="179"/>
    </location>
</feature>
<feature type="helix" evidence="14">
    <location>
        <begin position="183"/>
        <end position="196"/>
    </location>
</feature>
<feature type="strand" evidence="14">
    <location>
        <begin position="199"/>
        <end position="202"/>
    </location>
</feature>
<feature type="turn" evidence="15">
    <location>
        <begin position="204"/>
        <end position="206"/>
    </location>
</feature>
<feature type="strand" evidence="12">
    <location>
        <begin position="208"/>
        <end position="210"/>
    </location>
</feature>
<feature type="helix" evidence="14">
    <location>
        <begin position="215"/>
        <end position="233"/>
    </location>
</feature>
<feature type="strand" evidence="14">
    <location>
        <begin position="238"/>
        <end position="242"/>
    </location>
</feature>
<feature type="helix" evidence="14">
    <location>
        <begin position="248"/>
        <end position="260"/>
    </location>
</feature>
<feature type="strand" evidence="14">
    <location>
        <begin position="264"/>
        <end position="269"/>
    </location>
</feature>
<feature type="helix" evidence="14">
    <location>
        <begin position="270"/>
        <end position="273"/>
    </location>
</feature>
<feature type="helix" evidence="14">
    <location>
        <begin position="275"/>
        <end position="288"/>
    </location>
</feature>
<feature type="strand" evidence="14">
    <location>
        <begin position="291"/>
        <end position="295"/>
    </location>
</feature>
<feature type="helix" evidence="14">
    <location>
        <begin position="299"/>
        <end position="301"/>
    </location>
</feature>
<feature type="strand" evidence="14">
    <location>
        <begin position="306"/>
        <end position="310"/>
    </location>
</feature>
<feature type="helix" evidence="14">
    <location>
        <begin position="312"/>
        <end position="322"/>
    </location>
</feature>
<feature type="strand" evidence="14">
    <location>
        <begin position="325"/>
        <end position="328"/>
    </location>
</feature>
<feature type="strand" evidence="14">
    <location>
        <begin position="332"/>
        <end position="336"/>
    </location>
</feature>
<feature type="helix" evidence="14">
    <location>
        <begin position="340"/>
        <end position="351"/>
    </location>
</feature>
<feature type="strand" evidence="14">
    <location>
        <begin position="353"/>
        <end position="355"/>
    </location>
</feature>
<feature type="turn" evidence="14">
    <location>
        <begin position="359"/>
        <end position="362"/>
    </location>
</feature>
<feature type="strand" evidence="14">
    <location>
        <begin position="376"/>
        <end position="379"/>
    </location>
</feature>
<feature type="helix" evidence="14">
    <location>
        <begin position="385"/>
        <end position="387"/>
    </location>
</feature>
<feature type="helix" evidence="14">
    <location>
        <begin position="388"/>
        <end position="395"/>
    </location>
</feature>
<feature type="strand" evidence="14">
    <location>
        <begin position="397"/>
        <end position="402"/>
    </location>
</feature>
<feature type="helix" evidence="14">
    <location>
        <begin position="405"/>
        <end position="408"/>
    </location>
</feature>
<feature type="helix" evidence="14">
    <location>
        <begin position="414"/>
        <end position="434"/>
    </location>
</feature>
<feature type="turn" evidence="14">
    <location>
        <begin position="438"/>
        <end position="440"/>
    </location>
</feature>
<feature type="helix" evidence="14">
    <location>
        <begin position="442"/>
        <end position="452"/>
    </location>
</feature>
<feature type="helix" evidence="14">
    <location>
        <begin position="454"/>
        <end position="462"/>
    </location>
</feature>
<feature type="strand" evidence="14">
    <location>
        <begin position="463"/>
        <end position="465"/>
    </location>
</feature>
<dbReference type="EC" id="4.1.1.39" evidence="2 4"/>
<dbReference type="EMBL" id="J01540">
    <property type="protein sequence ID" value="AAA22041.1"/>
    <property type="molecule type" value="Genomic_DNA"/>
</dbReference>
<dbReference type="EMBL" id="L02520">
    <property type="protein sequence ID" value="AAA22024.1"/>
    <property type="molecule type" value="Genomic_DNA"/>
</dbReference>
<dbReference type="EMBL" id="L02521">
    <property type="protein sequence ID" value="AAA22027.1"/>
    <property type="molecule type" value="Genomic_DNA"/>
</dbReference>
<dbReference type="EMBL" id="L02522">
    <property type="protein sequence ID" value="AAA22028.1"/>
    <property type="molecule type" value="Genomic_DNA"/>
</dbReference>
<dbReference type="EMBL" id="BA000019">
    <property type="protein sequence ID" value="BAB77890.1"/>
    <property type="molecule type" value="Genomic_DNA"/>
</dbReference>
<dbReference type="PIR" id="A01099">
    <property type="entry name" value="RKAIL7"/>
</dbReference>
<dbReference type="PIR" id="AF1996">
    <property type="entry name" value="AF1996"/>
</dbReference>
<dbReference type="RefSeq" id="WP_010995693.1">
    <property type="nucleotide sequence ID" value="NZ_RSCN01000022.1"/>
</dbReference>
<dbReference type="PDB" id="6KKM">
    <property type="method" value="X-ray"/>
    <property type="resolution" value="3.00 A"/>
    <property type="chains" value="A/B/C/D=1-476"/>
</dbReference>
<dbReference type="PDB" id="6LRR">
    <property type="method" value="EM"/>
    <property type="resolution" value="3.37 A"/>
    <property type="chains" value="A/B/C/D/E/F/G/H=1-476"/>
</dbReference>
<dbReference type="PDB" id="6LRS">
    <property type="method" value="EM"/>
    <property type="resolution" value="3.37 A"/>
    <property type="chains" value="A/B/C/D/E/F/G/H=1-476"/>
</dbReference>
<dbReference type="PDB" id="6Z1F">
    <property type="method" value="EM"/>
    <property type="resolution" value="2.86 A"/>
    <property type="chains" value="A/B/C/D/E/F/G/H=1-476"/>
</dbReference>
<dbReference type="PDB" id="6Z1G">
    <property type="method" value="EM"/>
    <property type="resolution" value="8.20 A"/>
    <property type="chains" value="B/C=1-476"/>
</dbReference>
<dbReference type="PDB" id="7XSD">
    <property type="method" value="EM"/>
    <property type="resolution" value="3.30 A"/>
    <property type="chains" value="A/B/C/D/E/F/G/H=1-476"/>
</dbReference>
<dbReference type="PDBsum" id="6KKM"/>
<dbReference type="PDBsum" id="6LRR"/>
<dbReference type="PDBsum" id="6LRS"/>
<dbReference type="PDBsum" id="6Z1F"/>
<dbReference type="PDBsum" id="6Z1G"/>
<dbReference type="PDBsum" id="7XSD"/>
<dbReference type="EMDB" id="EMD-0959"/>
<dbReference type="EMDB" id="EMD-0960"/>
<dbReference type="EMDB" id="EMD-11028"/>
<dbReference type="EMDB" id="EMD-11029"/>
<dbReference type="SMR" id="P00879"/>
<dbReference type="STRING" id="103690.gene:10493537"/>
<dbReference type="KEGG" id="ana:alr1524"/>
<dbReference type="eggNOG" id="COG1850">
    <property type="taxonomic scope" value="Bacteria"/>
</dbReference>
<dbReference type="OrthoDB" id="9770811at2"/>
<dbReference type="CD-CODE" id="96C56C72">
    <property type="entry name" value="Synthetic Condensate 000354"/>
</dbReference>
<dbReference type="Proteomes" id="UP000002483">
    <property type="component" value="Chromosome"/>
</dbReference>
<dbReference type="GO" id="GO:0031470">
    <property type="term" value="C:carboxysome"/>
    <property type="evidence" value="ECO:0000314"/>
    <property type="project" value="UniProtKB"/>
</dbReference>
<dbReference type="GO" id="GO:0000287">
    <property type="term" value="F:magnesium ion binding"/>
    <property type="evidence" value="ECO:0007669"/>
    <property type="project" value="UniProtKB-UniRule"/>
</dbReference>
<dbReference type="GO" id="GO:0004497">
    <property type="term" value="F:monooxygenase activity"/>
    <property type="evidence" value="ECO:0007669"/>
    <property type="project" value="UniProtKB-KW"/>
</dbReference>
<dbReference type="GO" id="GO:0016984">
    <property type="term" value="F:ribulose-bisphosphate carboxylase activity"/>
    <property type="evidence" value="ECO:0007669"/>
    <property type="project" value="UniProtKB-UniRule"/>
</dbReference>
<dbReference type="GO" id="GO:0009853">
    <property type="term" value="P:photorespiration"/>
    <property type="evidence" value="ECO:0007669"/>
    <property type="project" value="UniProtKB-KW"/>
</dbReference>
<dbReference type="GO" id="GO:0019253">
    <property type="term" value="P:reductive pentose-phosphate cycle"/>
    <property type="evidence" value="ECO:0007669"/>
    <property type="project" value="UniProtKB-UniRule"/>
</dbReference>
<dbReference type="CDD" id="cd08212">
    <property type="entry name" value="RuBisCO_large_I"/>
    <property type="match status" value="1"/>
</dbReference>
<dbReference type="Gene3D" id="3.20.20.110">
    <property type="entry name" value="Ribulose bisphosphate carboxylase, large subunit, C-terminal domain"/>
    <property type="match status" value="1"/>
</dbReference>
<dbReference type="Gene3D" id="3.30.70.150">
    <property type="entry name" value="RuBisCO large subunit, N-terminal domain"/>
    <property type="match status" value="1"/>
</dbReference>
<dbReference type="HAMAP" id="MF_01338">
    <property type="entry name" value="RuBisCO_L_type1"/>
    <property type="match status" value="1"/>
</dbReference>
<dbReference type="InterPro" id="IPR033966">
    <property type="entry name" value="RuBisCO"/>
</dbReference>
<dbReference type="InterPro" id="IPR020878">
    <property type="entry name" value="RuBisCo_large_chain_AS"/>
</dbReference>
<dbReference type="InterPro" id="IPR000685">
    <property type="entry name" value="RuBisCO_lsu_C"/>
</dbReference>
<dbReference type="InterPro" id="IPR036376">
    <property type="entry name" value="RuBisCO_lsu_C_sf"/>
</dbReference>
<dbReference type="InterPro" id="IPR017443">
    <property type="entry name" value="RuBisCO_lsu_fd_N"/>
</dbReference>
<dbReference type="InterPro" id="IPR036422">
    <property type="entry name" value="RuBisCO_lsu_N_sf"/>
</dbReference>
<dbReference type="InterPro" id="IPR020888">
    <property type="entry name" value="RuBisCO_lsuI"/>
</dbReference>
<dbReference type="NCBIfam" id="NF003252">
    <property type="entry name" value="PRK04208.1"/>
    <property type="match status" value="1"/>
</dbReference>
<dbReference type="PANTHER" id="PTHR42704">
    <property type="entry name" value="RIBULOSE BISPHOSPHATE CARBOXYLASE"/>
    <property type="match status" value="1"/>
</dbReference>
<dbReference type="PANTHER" id="PTHR42704:SF17">
    <property type="entry name" value="RIBULOSE BISPHOSPHATE CARBOXYLASE LARGE CHAIN"/>
    <property type="match status" value="1"/>
</dbReference>
<dbReference type="Pfam" id="PF00016">
    <property type="entry name" value="RuBisCO_large"/>
    <property type="match status" value="1"/>
</dbReference>
<dbReference type="Pfam" id="PF02788">
    <property type="entry name" value="RuBisCO_large_N"/>
    <property type="match status" value="1"/>
</dbReference>
<dbReference type="SFLD" id="SFLDG01052">
    <property type="entry name" value="RuBisCO"/>
    <property type="match status" value="1"/>
</dbReference>
<dbReference type="SFLD" id="SFLDS00014">
    <property type="entry name" value="RuBisCO"/>
    <property type="match status" value="1"/>
</dbReference>
<dbReference type="SFLD" id="SFLDG00301">
    <property type="entry name" value="RuBisCO-like_proteins"/>
    <property type="match status" value="1"/>
</dbReference>
<dbReference type="SUPFAM" id="SSF51649">
    <property type="entry name" value="RuBisCo, C-terminal domain"/>
    <property type="match status" value="1"/>
</dbReference>
<dbReference type="SUPFAM" id="SSF54966">
    <property type="entry name" value="RuBisCO, large subunit, small (N-terminal) domain"/>
    <property type="match status" value="1"/>
</dbReference>
<dbReference type="PROSITE" id="PS00157">
    <property type="entry name" value="RUBISCO_LARGE"/>
    <property type="match status" value="1"/>
</dbReference>
<name>RBL_NOSS1</name>
<accession>P00879</accession>
<accession>Q60124</accession>
<proteinExistence type="evidence at protein level"/>
<organism>
    <name type="scientific">Nostoc sp. (strain PCC 7120 / SAG 25.82 / UTEX 2576)</name>
    <dbReference type="NCBI Taxonomy" id="103690"/>
    <lineage>
        <taxon>Bacteria</taxon>
        <taxon>Bacillati</taxon>
        <taxon>Cyanobacteriota</taxon>
        <taxon>Cyanophyceae</taxon>
        <taxon>Nostocales</taxon>
        <taxon>Nostocaceae</taxon>
        <taxon>Nostoc</taxon>
    </lineage>
</organism>